<dbReference type="EC" id="2.7.10.2"/>
<dbReference type="EMBL" id="AB077385">
    <property type="protein sequence ID" value="BAC11716.1"/>
    <property type="molecule type" value="mRNA"/>
</dbReference>
<dbReference type="EMBL" id="AJ439593">
    <property type="protein sequence ID" value="CAD28679.1"/>
    <property type="molecule type" value="mRNA"/>
</dbReference>
<dbReference type="EMBL" id="AC009525">
    <property type="protein sequence ID" value="AAF02869.1"/>
    <property type="status" value="ALT_SEQ"/>
    <property type="molecule type" value="Genomic_DNA"/>
</dbReference>
<dbReference type="EMBL" id="CP002684">
    <property type="protein sequence ID" value="AEE27508.1"/>
    <property type="molecule type" value="Genomic_DNA"/>
</dbReference>
<dbReference type="PIR" id="C86160">
    <property type="entry name" value="C86160"/>
</dbReference>
<dbReference type="RefSeq" id="NP_171796.1">
    <property type="nucleotide sequence ID" value="NM_100178.3"/>
</dbReference>
<dbReference type="SMR" id="Q8L4H0"/>
<dbReference type="BioGRID" id="24688">
    <property type="interactions" value="9"/>
</dbReference>
<dbReference type="FunCoup" id="Q8L4H0">
    <property type="interactions" value="999"/>
</dbReference>
<dbReference type="IntAct" id="Q8L4H0">
    <property type="interactions" value="8"/>
</dbReference>
<dbReference type="STRING" id="3702.Q8L4H0"/>
<dbReference type="PaxDb" id="3702-AT1G02970.1"/>
<dbReference type="ProteomicsDB" id="243078"/>
<dbReference type="EnsemblPlants" id="AT1G02970.1">
    <property type="protein sequence ID" value="AT1G02970.1"/>
    <property type="gene ID" value="AT1G02970"/>
</dbReference>
<dbReference type="GeneID" id="839453"/>
<dbReference type="Gramene" id="AT1G02970.1">
    <property type="protein sequence ID" value="AT1G02970.1"/>
    <property type="gene ID" value="AT1G02970"/>
</dbReference>
<dbReference type="KEGG" id="ath:AT1G02970"/>
<dbReference type="Araport" id="AT1G02970"/>
<dbReference type="TAIR" id="AT1G02970">
    <property type="gene designation" value="WEE1"/>
</dbReference>
<dbReference type="eggNOG" id="KOG0601">
    <property type="taxonomic scope" value="Eukaryota"/>
</dbReference>
<dbReference type="HOGENOM" id="CLU_000288_25_0_1"/>
<dbReference type="InParanoid" id="Q8L4H0"/>
<dbReference type="OMA" id="SKDHSPC"/>
<dbReference type="PhylomeDB" id="Q8L4H0"/>
<dbReference type="PRO" id="PR:Q8L4H0"/>
<dbReference type="Proteomes" id="UP000006548">
    <property type="component" value="Chromosome 1"/>
</dbReference>
<dbReference type="ExpressionAtlas" id="Q8L4H0">
    <property type="expression patterns" value="baseline and differential"/>
</dbReference>
<dbReference type="GO" id="GO:0005634">
    <property type="term" value="C:nucleus"/>
    <property type="evidence" value="ECO:0007669"/>
    <property type="project" value="UniProtKB-SubCell"/>
</dbReference>
<dbReference type="GO" id="GO:0005524">
    <property type="term" value="F:ATP binding"/>
    <property type="evidence" value="ECO:0007669"/>
    <property type="project" value="UniProtKB-KW"/>
</dbReference>
<dbReference type="GO" id="GO:0046872">
    <property type="term" value="F:metal ion binding"/>
    <property type="evidence" value="ECO:0007669"/>
    <property type="project" value="UniProtKB-KW"/>
</dbReference>
<dbReference type="GO" id="GO:0004715">
    <property type="term" value="F:non-membrane spanning protein tyrosine kinase activity"/>
    <property type="evidence" value="ECO:0007669"/>
    <property type="project" value="UniProtKB-EC"/>
</dbReference>
<dbReference type="GO" id="GO:0004672">
    <property type="term" value="F:protein kinase activity"/>
    <property type="evidence" value="ECO:0000314"/>
    <property type="project" value="TAIR"/>
</dbReference>
<dbReference type="GO" id="GO:0051301">
    <property type="term" value="P:cell division"/>
    <property type="evidence" value="ECO:0007669"/>
    <property type="project" value="UniProtKB-KW"/>
</dbReference>
<dbReference type="GO" id="GO:0000076">
    <property type="term" value="P:DNA replication checkpoint signaling"/>
    <property type="evidence" value="ECO:0007669"/>
    <property type="project" value="InterPro"/>
</dbReference>
<dbReference type="GO" id="GO:1902750">
    <property type="term" value="P:negative regulation of cell cycle G2/M phase transition"/>
    <property type="evidence" value="ECO:0000315"/>
    <property type="project" value="TAIR"/>
</dbReference>
<dbReference type="CDD" id="cd13997">
    <property type="entry name" value="PKc_Wee1_like"/>
    <property type="match status" value="1"/>
</dbReference>
<dbReference type="FunFam" id="3.30.200.20:FF:000356">
    <property type="entry name" value="WEE protein kinase"/>
    <property type="match status" value="1"/>
</dbReference>
<dbReference type="FunFam" id="1.10.510.10:FF:000531">
    <property type="entry name" value="Wee1-like protein kinase"/>
    <property type="match status" value="1"/>
</dbReference>
<dbReference type="Gene3D" id="3.30.200.20">
    <property type="entry name" value="Phosphorylase Kinase, domain 1"/>
    <property type="match status" value="1"/>
</dbReference>
<dbReference type="Gene3D" id="1.10.510.10">
    <property type="entry name" value="Transferase(Phosphotransferase) domain 1"/>
    <property type="match status" value="1"/>
</dbReference>
<dbReference type="InterPro" id="IPR050339">
    <property type="entry name" value="CC_SR_Kinase"/>
</dbReference>
<dbReference type="InterPro" id="IPR011009">
    <property type="entry name" value="Kinase-like_dom_sf"/>
</dbReference>
<dbReference type="InterPro" id="IPR045067">
    <property type="entry name" value="PKc_Wee1-like"/>
</dbReference>
<dbReference type="InterPro" id="IPR000719">
    <property type="entry name" value="Prot_kinase_dom"/>
</dbReference>
<dbReference type="InterPro" id="IPR017441">
    <property type="entry name" value="Protein_kinase_ATP_BS"/>
</dbReference>
<dbReference type="InterPro" id="IPR008271">
    <property type="entry name" value="Ser/Thr_kinase_AS"/>
</dbReference>
<dbReference type="PANTHER" id="PTHR11042">
    <property type="entry name" value="EUKARYOTIC TRANSLATION INITIATION FACTOR 2-ALPHA KINASE EIF2-ALPHA KINASE -RELATED"/>
    <property type="match status" value="1"/>
</dbReference>
<dbReference type="PANTHER" id="PTHR11042:SF185">
    <property type="entry name" value="WEE1-LIKE PROTEIN KINASE"/>
    <property type="match status" value="1"/>
</dbReference>
<dbReference type="Pfam" id="PF00069">
    <property type="entry name" value="Pkinase"/>
    <property type="match status" value="1"/>
</dbReference>
<dbReference type="SMART" id="SM00220">
    <property type="entry name" value="S_TKc"/>
    <property type="match status" value="1"/>
</dbReference>
<dbReference type="SUPFAM" id="SSF56112">
    <property type="entry name" value="Protein kinase-like (PK-like)"/>
    <property type="match status" value="1"/>
</dbReference>
<dbReference type="PROSITE" id="PS00107">
    <property type="entry name" value="PROTEIN_KINASE_ATP"/>
    <property type="match status" value="1"/>
</dbReference>
<dbReference type="PROSITE" id="PS50011">
    <property type="entry name" value="PROTEIN_KINASE_DOM"/>
    <property type="match status" value="1"/>
</dbReference>
<dbReference type="PROSITE" id="PS00108">
    <property type="entry name" value="PROTEIN_KINASE_ST"/>
    <property type="match status" value="1"/>
</dbReference>
<keyword id="KW-0067">ATP-binding</keyword>
<keyword id="KW-0131">Cell cycle</keyword>
<keyword id="KW-0132">Cell division</keyword>
<keyword id="KW-0418">Kinase</keyword>
<keyword id="KW-0460">Magnesium</keyword>
<keyword id="KW-0479">Metal-binding</keyword>
<keyword id="KW-0498">Mitosis</keyword>
<keyword id="KW-0547">Nucleotide-binding</keyword>
<keyword id="KW-0539">Nucleus</keyword>
<keyword id="KW-1185">Reference proteome</keyword>
<keyword id="KW-0808">Transferase</keyword>
<keyword id="KW-0829">Tyrosine-protein kinase</keyword>
<protein>
    <recommendedName>
        <fullName>Wee1-like protein kinase</fullName>
        <ecNumber>2.7.10.2</ecNumber>
    </recommendedName>
    <alternativeName>
        <fullName>Wee1-At</fullName>
    </alternativeName>
</protein>
<name>WEE1_ARATH</name>
<reference key="1">
    <citation type="journal article" date="2002" name="Planta">
        <title>A WEE1 homologue from Arabidopsis thaliana.</title>
        <authorList>
            <person name="Sorrell D.A."/>
            <person name="Marchbank A."/>
            <person name="McMahon K."/>
            <person name="Dickinson J.R."/>
            <person name="Rogers H.J."/>
            <person name="Francis D."/>
        </authorList>
    </citation>
    <scope>NUCLEOTIDE SEQUENCE [MRNA]</scope>
    <scope>FUNCTION</scope>
    <scope>TISSUE SPECIFICITY</scope>
    <source>
        <strain>cv. Columbia</strain>
    </source>
</reference>
<reference key="2">
    <citation type="journal article" date="2006" name="Plant J.">
        <title>Diverse phosphoregulatory mechanisms controlling cyclin-dependent kinase-activating kinases in Arabidopsis.</title>
        <authorList>
            <person name="Shimotohno A."/>
            <person name="Ohno R."/>
            <person name="Bisova K."/>
            <person name="Sakaguchi N."/>
            <person name="Huang J."/>
            <person name="Koncz C."/>
            <person name="Uchimiya H."/>
            <person name="Umeda M."/>
        </authorList>
    </citation>
    <scope>NUCLEOTIDE SEQUENCE [MRNA]</scope>
    <scope>FUNCTION</scope>
    <scope>SUBCELLULAR LOCATION</scope>
    <source>
        <strain>cv. Columbia</strain>
    </source>
</reference>
<reference key="3">
    <citation type="journal article" date="2000" name="Nature">
        <title>Sequence and analysis of chromosome 1 of the plant Arabidopsis thaliana.</title>
        <authorList>
            <person name="Theologis A."/>
            <person name="Ecker J.R."/>
            <person name="Palm C.J."/>
            <person name="Federspiel N.A."/>
            <person name="Kaul S."/>
            <person name="White O."/>
            <person name="Alonso J."/>
            <person name="Altafi H."/>
            <person name="Araujo R."/>
            <person name="Bowman C.L."/>
            <person name="Brooks S.Y."/>
            <person name="Buehler E."/>
            <person name="Chan A."/>
            <person name="Chao Q."/>
            <person name="Chen H."/>
            <person name="Cheuk R.F."/>
            <person name="Chin C.W."/>
            <person name="Chung M.K."/>
            <person name="Conn L."/>
            <person name="Conway A.B."/>
            <person name="Conway A.R."/>
            <person name="Creasy T.H."/>
            <person name="Dewar K."/>
            <person name="Dunn P."/>
            <person name="Etgu P."/>
            <person name="Feldblyum T.V."/>
            <person name="Feng J.-D."/>
            <person name="Fong B."/>
            <person name="Fujii C.Y."/>
            <person name="Gill J.E."/>
            <person name="Goldsmith A.D."/>
            <person name="Haas B."/>
            <person name="Hansen N.F."/>
            <person name="Hughes B."/>
            <person name="Huizar L."/>
            <person name="Hunter J.L."/>
            <person name="Jenkins J."/>
            <person name="Johnson-Hopson C."/>
            <person name="Khan S."/>
            <person name="Khaykin E."/>
            <person name="Kim C.J."/>
            <person name="Koo H.L."/>
            <person name="Kremenetskaia I."/>
            <person name="Kurtz D.B."/>
            <person name="Kwan A."/>
            <person name="Lam B."/>
            <person name="Langin-Hooper S."/>
            <person name="Lee A."/>
            <person name="Lee J.M."/>
            <person name="Lenz C.A."/>
            <person name="Li J.H."/>
            <person name="Li Y.-P."/>
            <person name="Lin X."/>
            <person name="Liu S.X."/>
            <person name="Liu Z.A."/>
            <person name="Luros J.S."/>
            <person name="Maiti R."/>
            <person name="Marziali A."/>
            <person name="Militscher J."/>
            <person name="Miranda M."/>
            <person name="Nguyen M."/>
            <person name="Nierman W.C."/>
            <person name="Osborne B.I."/>
            <person name="Pai G."/>
            <person name="Peterson J."/>
            <person name="Pham P.K."/>
            <person name="Rizzo M."/>
            <person name="Rooney T."/>
            <person name="Rowley D."/>
            <person name="Sakano H."/>
            <person name="Salzberg S.L."/>
            <person name="Schwartz J.R."/>
            <person name="Shinn P."/>
            <person name="Southwick A.M."/>
            <person name="Sun H."/>
            <person name="Tallon L.J."/>
            <person name="Tambunga G."/>
            <person name="Toriumi M.J."/>
            <person name="Town C.D."/>
            <person name="Utterback T."/>
            <person name="Van Aken S."/>
            <person name="Vaysberg M."/>
            <person name="Vysotskaia V.S."/>
            <person name="Walker M."/>
            <person name="Wu D."/>
            <person name="Yu G."/>
            <person name="Fraser C.M."/>
            <person name="Venter J.C."/>
            <person name="Davis R.W."/>
        </authorList>
    </citation>
    <scope>NUCLEOTIDE SEQUENCE [LARGE SCALE GENOMIC DNA]</scope>
    <source>
        <strain>cv. Columbia</strain>
    </source>
</reference>
<reference key="4">
    <citation type="journal article" date="2017" name="Plant J.">
        <title>Araport11: a complete reannotation of the Arabidopsis thaliana reference genome.</title>
        <authorList>
            <person name="Cheng C.Y."/>
            <person name="Krishnakumar V."/>
            <person name="Chan A.P."/>
            <person name="Thibaud-Nissen F."/>
            <person name="Schobel S."/>
            <person name="Town C.D."/>
        </authorList>
    </citation>
    <scope>GENOME REANNOTATION</scope>
    <source>
        <strain>cv. Columbia</strain>
    </source>
</reference>
<reference key="5">
    <citation type="journal article" date="2007" name="Plant Cell">
        <title>Arabidopsis WEE1 kinase controls cell cycle arrest in response to activation of the DNA integrity checkpoint.</title>
        <authorList>
            <person name="de Schutter K."/>
            <person name="Joubes J."/>
            <person name="Cools T."/>
            <person name="Verkest A."/>
            <person name="Corellou F."/>
            <person name="Babiychuk E."/>
            <person name="van der Schueren E."/>
            <person name="Beeckman T."/>
            <person name="Kushnir S."/>
            <person name="Inze D."/>
            <person name="de Veylder L."/>
        </authorList>
    </citation>
    <scope>FUNCTION</scope>
    <scope>DISRUPTION PHENOTYPE</scope>
    <scope>TISSUE SPECIFICITY</scope>
    <scope>INDUCTION</scope>
    <scope>INTERACTION WITH CDKA-1</scope>
</reference>
<organism>
    <name type="scientific">Arabidopsis thaliana</name>
    <name type="common">Mouse-ear cress</name>
    <dbReference type="NCBI Taxonomy" id="3702"/>
    <lineage>
        <taxon>Eukaryota</taxon>
        <taxon>Viridiplantae</taxon>
        <taxon>Streptophyta</taxon>
        <taxon>Embryophyta</taxon>
        <taxon>Tracheophyta</taxon>
        <taxon>Spermatophyta</taxon>
        <taxon>Magnoliopsida</taxon>
        <taxon>eudicotyledons</taxon>
        <taxon>Gunneridae</taxon>
        <taxon>Pentapetalae</taxon>
        <taxon>rosids</taxon>
        <taxon>malvids</taxon>
        <taxon>Brassicales</taxon>
        <taxon>Brassicaceae</taxon>
        <taxon>Camelineae</taxon>
        <taxon>Arabidopsis</taxon>
    </lineage>
</organism>
<feature type="chain" id="PRO_0000295672" description="Wee1-like protein kinase">
    <location>
        <begin position="1"/>
        <end position="500"/>
    </location>
</feature>
<feature type="domain" description="Protein kinase" evidence="2">
    <location>
        <begin position="249"/>
        <end position="495"/>
    </location>
</feature>
<feature type="region of interest" description="Disordered" evidence="4">
    <location>
        <begin position="141"/>
        <end position="169"/>
    </location>
</feature>
<feature type="compositionally biased region" description="Polar residues" evidence="4">
    <location>
        <begin position="143"/>
        <end position="155"/>
    </location>
</feature>
<feature type="active site" description="Proton acceptor" evidence="2 3">
    <location>
        <position position="372"/>
    </location>
</feature>
<feature type="binding site" evidence="2">
    <location>
        <begin position="255"/>
        <end position="263"/>
    </location>
    <ligand>
        <name>ATP</name>
        <dbReference type="ChEBI" id="CHEBI:30616"/>
    </ligand>
</feature>
<feature type="binding site" evidence="2">
    <location>
        <position position="278"/>
    </location>
    <ligand>
        <name>ATP</name>
        <dbReference type="ChEBI" id="CHEBI:30616"/>
    </ligand>
</feature>
<feature type="binding site" evidence="1">
    <location>
        <position position="377"/>
    </location>
    <ligand>
        <name>Mg(2+)</name>
        <dbReference type="ChEBI" id="CHEBI:18420"/>
    </ligand>
</feature>
<feature type="binding site" evidence="1">
    <location>
        <position position="389"/>
    </location>
    <ligand>
        <name>Mg(2+)</name>
        <dbReference type="ChEBI" id="CHEBI:18420"/>
    </ligand>
</feature>
<comment type="function">
    <text evidence="5 6 7">Cell cycle regulatory kinase that is not rate-limiting for cycle progression under normal growth conditions. Transcriptionally activated upon DNA stress or damage in an ATR- or ATM-dependent manner. Once activated, inhibits plant growth by arresting dividing cells in the G2 phase before proceeding into mitosis. Down-regulates CDKA-1 and CDKD-2 by tyrosine phosphorylation. May target principally CDKA-1.</text>
</comment>
<comment type="catalytic activity">
    <reaction evidence="3">
        <text>L-tyrosyl-[protein] + ATP = O-phospho-L-tyrosyl-[protein] + ADP + H(+)</text>
        <dbReference type="Rhea" id="RHEA:10596"/>
        <dbReference type="Rhea" id="RHEA-COMP:10136"/>
        <dbReference type="Rhea" id="RHEA-COMP:20101"/>
        <dbReference type="ChEBI" id="CHEBI:15378"/>
        <dbReference type="ChEBI" id="CHEBI:30616"/>
        <dbReference type="ChEBI" id="CHEBI:46858"/>
        <dbReference type="ChEBI" id="CHEBI:61978"/>
        <dbReference type="ChEBI" id="CHEBI:456216"/>
        <dbReference type="EC" id="2.7.10.2"/>
    </reaction>
</comment>
<comment type="subunit">
    <text evidence="7">Interacts with CDKA-1, but not with CDKB1-1.</text>
</comment>
<comment type="subcellular location">
    <subcellularLocation>
        <location evidence="6">Nucleus</location>
    </subcellularLocation>
</comment>
<comment type="tissue specificity">
    <text evidence="5 7">Expressed in shoot apex, vasculatures tissues of roots and leaves, and developing flowers.</text>
</comment>
<comment type="induction">
    <text evidence="7">By replication blocking agents (hydroxyurea and aphidicolin).</text>
</comment>
<comment type="disruption phenotype">
    <text evidence="7">Plants show no obvious cell division or endoreduplication phenotype when grown under nonstress conditions, but are hypersensitive to agents that impair DNA replication.</text>
</comment>
<comment type="similarity">
    <text evidence="2">Belongs to the protein kinase superfamily. Ser/Thr protein kinase family. WEE1 subfamily.</text>
</comment>
<comment type="sequence caution" evidence="8">
    <conflict type="erroneous gene model prediction">
        <sequence resource="EMBL-CDS" id="AAF02869"/>
    </conflict>
</comment>
<proteinExistence type="evidence at protein level"/>
<accession>Q8L4H0</accession>
<accession>Q9SRY9</accession>
<gene>
    <name type="primary">WEE1</name>
    <name type="ordered locus">At1g02970</name>
    <name type="ORF">F22D16.3</name>
</gene>
<sequence>MFEKNGRTLLAKRKTQGTIKTRASKKIRKMEGTLERHSLLQFGQLSKISFENRPSSNVASSAFQGLLDSDSSELRNQLGSADSDANCGEKDFILSQDFFCTPDYITPDNQNLMSGLDISKDHSPCPRSPVKLNTVKSKRCRQESFTGNHSNSTWSSKHRVDEQENDDIDTDEVMGDKLQANQTERTGYVSQAAVALRCRAMPPPCLKNPYVLNQSETATDPFGHQRSKCASFLPVSTSGDGLSRYLTDFHEIRQIGAGHFSRVFKVLKRMDGCLYAVKHSTRKLYLDSERRKAMMEVQALAALGFHENIVGYYSSWFENEQLYIQLELCDHSLSALPKKSSLKVSEREILVIMHQIAKALHFVHEKGIAHLDVKPDNIYIKNGVCKLGDFGCATRLDKSLPVEEGDARYMPQEILNEDYEHLDKVDIFSLGVTVYELIKGSPLTESRNQSLNIKEGKLPLLPGHSLQLQQLLKTMMDRDPKRRPSARELLDHPMFDRIRG</sequence>
<evidence type="ECO:0000250" key="1"/>
<evidence type="ECO:0000255" key="2">
    <source>
        <dbReference type="PROSITE-ProRule" id="PRU00159"/>
    </source>
</evidence>
<evidence type="ECO:0000255" key="3">
    <source>
        <dbReference type="PROSITE-ProRule" id="PRU10027"/>
    </source>
</evidence>
<evidence type="ECO:0000256" key="4">
    <source>
        <dbReference type="SAM" id="MobiDB-lite"/>
    </source>
</evidence>
<evidence type="ECO:0000269" key="5">
    <source>
    </source>
</evidence>
<evidence type="ECO:0000269" key="6">
    <source>
    </source>
</evidence>
<evidence type="ECO:0000269" key="7">
    <source>
    </source>
</evidence>
<evidence type="ECO:0000305" key="8"/>